<keyword id="KW-0963">Cytoplasm</keyword>
<keyword id="KW-0488">Methylation</keyword>
<keyword id="KW-0648">Protein biosynthesis</keyword>
<keyword id="KW-1185">Reference proteome</keyword>
<sequence length="359" mass="40812">MEFDKQFFSSVEKIVELAEQLEKDLNKPDLTFEQIKAINKELKHKQPLVVKFKEFKRLIDQALEAEAILENNELKELHDEAKKELERVRSVVPEYEEALKLLLLPIDENNQKNVIVELRPAAGGDESCIFLADLFNMYRNFCSNKGWKLQINEMIPSSVGLNFVSFEVNGVDVFAKLKFESGVHRVQRVPATESKGRVHTSTVTVAVLPQLEAVEVHINPADLRVDTYRASGAGGQHVNRTESAVRITHLPTGIVVSCQEGKSQFTNRDTAMKMLRAKLWEKAQNEQLSTQAGLRKSQVGSGDRAEKIRTYNYPQNRVTDHRIKLTVNKLNTIILGDLDEIIEALQADEKKQQLENFFS</sequence>
<comment type="function">
    <text evidence="1">Peptide chain release factor 1 directs the termination of translation in response to the peptide chain termination codons UAG and UAA.</text>
</comment>
<comment type="subcellular location">
    <subcellularLocation>
        <location evidence="1">Cytoplasm</location>
    </subcellularLocation>
</comment>
<comment type="PTM">
    <text evidence="1">Methylated by PrmC. Methylation increases the termination efficiency of RF1 (By similarity).</text>
</comment>
<comment type="similarity">
    <text evidence="2">Belongs to the prokaryotic/mitochondrial release factor family.</text>
</comment>
<gene>
    <name type="primary">prfA</name>
    <name type="ordered locus">MPN_361</name>
    <name type="ORF">MP475</name>
</gene>
<name>RF1_MYCPN</name>
<protein>
    <recommendedName>
        <fullName>Peptide chain release factor 1</fullName>
        <shortName>RF-1</shortName>
    </recommendedName>
</protein>
<organism>
    <name type="scientific">Mycoplasma pneumoniae (strain ATCC 29342 / M129 / Subtype 1)</name>
    <name type="common">Mycoplasmoides pneumoniae</name>
    <dbReference type="NCBI Taxonomy" id="272634"/>
    <lineage>
        <taxon>Bacteria</taxon>
        <taxon>Bacillati</taxon>
        <taxon>Mycoplasmatota</taxon>
        <taxon>Mycoplasmoidales</taxon>
        <taxon>Mycoplasmoidaceae</taxon>
        <taxon>Mycoplasmoides</taxon>
    </lineage>
</organism>
<feature type="chain" id="PRO_0000177709" description="Peptide chain release factor 1">
    <location>
        <begin position="1"/>
        <end position="359"/>
    </location>
</feature>
<feature type="modified residue" description="N5-methylglutamine" evidence="1">
    <location>
        <position position="236"/>
    </location>
</feature>
<accession>P75420</accession>
<reference key="1">
    <citation type="journal article" date="1996" name="Nucleic Acids Res.">
        <title>Complete sequence analysis of the genome of the bacterium Mycoplasma pneumoniae.</title>
        <authorList>
            <person name="Himmelreich R."/>
            <person name="Hilbert H."/>
            <person name="Plagens H."/>
            <person name="Pirkl E."/>
            <person name="Li B.-C."/>
            <person name="Herrmann R."/>
        </authorList>
    </citation>
    <scope>NUCLEOTIDE SEQUENCE [LARGE SCALE GENOMIC DNA]</scope>
    <source>
        <strain>ATCC 29342 / M129 / Subtype 1</strain>
    </source>
</reference>
<dbReference type="EMBL" id="U00089">
    <property type="protein sequence ID" value="AAB96123.1"/>
    <property type="molecule type" value="Genomic_DNA"/>
</dbReference>
<dbReference type="PIR" id="S73801">
    <property type="entry name" value="S73801"/>
</dbReference>
<dbReference type="RefSeq" id="NP_110049.1">
    <property type="nucleotide sequence ID" value="NC_000912.1"/>
</dbReference>
<dbReference type="RefSeq" id="WP_010874717.1">
    <property type="nucleotide sequence ID" value="NC_000912.1"/>
</dbReference>
<dbReference type="SMR" id="P75420"/>
<dbReference type="IntAct" id="P75420">
    <property type="interactions" value="3"/>
</dbReference>
<dbReference type="STRING" id="272634.MPN_361"/>
<dbReference type="EnsemblBacteria" id="AAB96123">
    <property type="protein sequence ID" value="AAB96123"/>
    <property type="gene ID" value="MPN_361"/>
</dbReference>
<dbReference type="KEGG" id="mpn:MPN_361"/>
<dbReference type="PATRIC" id="fig|272634.6.peg.388"/>
<dbReference type="HOGENOM" id="CLU_036856_0_1_14"/>
<dbReference type="OrthoDB" id="9806673at2"/>
<dbReference type="BioCyc" id="MPNE272634:G1GJ3-568-MONOMER"/>
<dbReference type="Proteomes" id="UP000000808">
    <property type="component" value="Chromosome"/>
</dbReference>
<dbReference type="GO" id="GO:0005737">
    <property type="term" value="C:cytoplasm"/>
    <property type="evidence" value="ECO:0007669"/>
    <property type="project" value="UniProtKB-SubCell"/>
</dbReference>
<dbReference type="GO" id="GO:0016149">
    <property type="term" value="F:translation release factor activity, codon specific"/>
    <property type="evidence" value="ECO:0007669"/>
    <property type="project" value="UniProtKB-UniRule"/>
</dbReference>
<dbReference type="FunFam" id="3.30.160.20:FF:000004">
    <property type="entry name" value="Peptide chain release factor 1"/>
    <property type="match status" value="1"/>
</dbReference>
<dbReference type="FunFam" id="3.30.70.1660:FF:000004">
    <property type="entry name" value="Peptide chain release factor 1"/>
    <property type="match status" value="1"/>
</dbReference>
<dbReference type="Gene3D" id="3.30.160.20">
    <property type="match status" value="1"/>
</dbReference>
<dbReference type="Gene3D" id="3.30.70.1660">
    <property type="match status" value="1"/>
</dbReference>
<dbReference type="Gene3D" id="6.10.140.1950">
    <property type="match status" value="1"/>
</dbReference>
<dbReference type="HAMAP" id="MF_00093">
    <property type="entry name" value="Rel_fac_1"/>
    <property type="match status" value="1"/>
</dbReference>
<dbReference type="InterPro" id="IPR005139">
    <property type="entry name" value="PCRF"/>
</dbReference>
<dbReference type="InterPro" id="IPR000352">
    <property type="entry name" value="Pep_chain_release_fac_I"/>
</dbReference>
<dbReference type="InterPro" id="IPR045853">
    <property type="entry name" value="Pep_chain_release_fac_I_sf"/>
</dbReference>
<dbReference type="InterPro" id="IPR050057">
    <property type="entry name" value="Prokaryotic/Mito_RF"/>
</dbReference>
<dbReference type="InterPro" id="IPR004373">
    <property type="entry name" value="RF-1"/>
</dbReference>
<dbReference type="NCBIfam" id="TIGR00019">
    <property type="entry name" value="prfA"/>
    <property type="match status" value="1"/>
</dbReference>
<dbReference type="NCBIfam" id="NF001859">
    <property type="entry name" value="PRK00591.1"/>
    <property type="match status" value="1"/>
</dbReference>
<dbReference type="PANTHER" id="PTHR43804">
    <property type="entry name" value="LD18447P"/>
    <property type="match status" value="1"/>
</dbReference>
<dbReference type="PANTHER" id="PTHR43804:SF7">
    <property type="entry name" value="LD18447P"/>
    <property type="match status" value="1"/>
</dbReference>
<dbReference type="Pfam" id="PF03462">
    <property type="entry name" value="PCRF"/>
    <property type="match status" value="1"/>
</dbReference>
<dbReference type="Pfam" id="PF00472">
    <property type="entry name" value="RF-1"/>
    <property type="match status" value="1"/>
</dbReference>
<dbReference type="SMART" id="SM00937">
    <property type="entry name" value="PCRF"/>
    <property type="match status" value="1"/>
</dbReference>
<dbReference type="SUPFAM" id="SSF75620">
    <property type="entry name" value="Release factor"/>
    <property type="match status" value="1"/>
</dbReference>
<dbReference type="PROSITE" id="PS00745">
    <property type="entry name" value="RF_PROK_I"/>
    <property type="match status" value="1"/>
</dbReference>
<proteinExistence type="inferred from homology"/>
<evidence type="ECO:0000250" key="1"/>
<evidence type="ECO:0000305" key="2"/>